<dbReference type="EMBL" id="AE014075">
    <property type="protein sequence ID" value="AAN78517.1"/>
    <property type="molecule type" value="Genomic_DNA"/>
</dbReference>
<dbReference type="RefSeq" id="WP_000843687.1">
    <property type="nucleotide sequence ID" value="NZ_CP051263.1"/>
</dbReference>
<dbReference type="STRING" id="199310.c0017"/>
<dbReference type="KEGG" id="ecc:c0017"/>
<dbReference type="eggNOG" id="ENOG502ZXCI">
    <property type="taxonomic scope" value="Bacteria"/>
</dbReference>
<dbReference type="HOGENOM" id="CLU_158661_0_0_6"/>
<dbReference type="BioCyc" id="ECOL199310:C0017-MONOMER"/>
<dbReference type="Proteomes" id="UP000001410">
    <property type="component" value="Chromosome"/>
</dbReference>
<dbReference type="HAMAP" id="MF_01372">
    <property type="entry name" value="UPF0412"/>
    <property type="match status" value="1"/>
</dbReference>
<dbReference type="InterPro" id="IPR020240">
    <property type="entry name" value="UPF0412_YaaI"/>
</dbReference>
<dbReference type="NCBIfam" id="NF007541">
    <property type="entry name" value="PRK10154.1"/>
    <property type="match status" value="1"/>
</dbReference>
<dbReference type="Pfam" id="PF10807">
    <property type="entry name" value="DUF2541"/>
    <property type="match status" value="1"/>
</dbReference>
<name>YAAI_ECOL6</name>
<feature type="signal peptide" evidence="1">
    <location>
        <begin position="1"/>
        <end position="23"/>
    </location>
</feature>
<feature type="chain" id="PRO_0000278584" description="UPF0412 protein YaaI">
    <location>
        <begin position="24"/>
        <end position="134"/>
    </location>
</feature>
<organism>
    <name type="scientific">Escherichia coli O6:H1 (strain CFT073 / ATCC 700928 / UPEC)</name>
    <dbReference type="NCBI Taxonomy" id="199310"/>
    <lineage>
        <taxon>Bacteria</taxon>
        <taxon>Pseudomonadati</taxon>
        <taxon>Pseudomonadota</taxon>
        <taxon>Gammaproteobacteria</taxon>
        <taxon>Enterobacterales</taxon>
        <taxon>Enterobacteriaceae</taxon>
        <taxon>Escherichia</taxon>
    </lineage>
</organism>
<sequence length="134" mass="14606">MKSVITISASLAISLMLCCTAQANDHKILGVIAMPRNETNDLALKLPVCRIVKRIQLSADHGDLQLSGASIYFKATRSASQTLNIPSEIKEEQTTDWININSDNDNKRCVSKITFSGHTVNSSDMATLKIIGDD</sequence>
<gene>
    <name evidence="1" type="primary">yaaI</name>
    <name type="ordered locus">c0017</name>
</gene>
<accession>Q8CWE7</accession>
<evidence type="ECO:0000255" key="1">
    <source>
        <dbReference type="HAMAP-Rule" id="MF_01372"/>
    </source>
</evidence>
<keyword id="KW-1185">Reference proteome</keyword>
<keyword id="KW-0732">Signal</keyword>
<protein>
    <recommendedName>
        <fullName evidence="1">UPF0412 protein YaaI</fullName>
    </recommendedName>
</protein>
<reference key="1">
    <citation type="journal article" date="2002" name="Proc. Natl. Acad. Sci. U.S.A.">
        <title>Extensive mosaic structure revealed by the complete genome sequence of uropathogenic Escherichia coli.</title>
        <authorList>
            <person name="Welch R.A."/>
            <person name="Burland V."/>
            <person name="Plunkett G. III"/>
            <person name="Redford P."/>
            <person name="Roesch P."/>
            <person name="Rasko D."/>
            <person name="Buckles E.L."/>
            <person name="Liou S.-R."/>
            <person name="Boutin A."/>
            <person name="Hackett J."/>
            <person name="Stroud D."/>
            <person name="Mayhew G.F."/>
            <person name="Rose D.J."/>
            <person name="Zhou S."/>
            <person name="Schwartz D.C."/>
            <person name="Perna N.T."/>
            <person name="Mobley H.L.T."/>
            <person name="Donnenberg M.S."/>
            <person name="Blattner F.R."/>
        </authorList>
    </citation>
    <scope>NUCLEOTIDE SEQUENCE [LARGE SCALE GENOMIC DNA]</scope>
    <source>
        <strain>CFT073 / ATCC 700928 / UPEC</strain>
    </source>
</reference>
<proteinExistence type="inferred from homology"/>
<comment type="similarity">
    <text evidence="1">Belongs to the UPF0412 family.</text>
</comment>